<proteinExistence type="inferred from homology"/>
<reference key="1">
    <citation type="journal article" date="2006" name="J. Bacteriol.">
        <title>The genome of the obligately intracellular bacterium Ehrlichia canis reveals themes of complex membrane structure and immune evasion strategies.</title>
        <authorList>
            <person name="Mavromatis K."/>
            <person name="Doyle C.K."/>
            <person name="Lykidis A."/>
            <person name="Ivanova N."/>
            <person name="Francino M.P."/>
            <person name="Chain P."/>
            <person name="Shin M."/>
            <person name="Malfatti S."/>
            <person name="Larimer F."/>
            <person name="Copeland A."/>
            <person name="Detter J.C."/>
            <person name="Land M."/>
            <person name="Richardson P.M."/>
            <person name="Yu X.J."/>
            <person name="Walker D.H."/>
            <person name="McBride J.W."/>
            <person name="Kyrpides N.C."/>
        </authorList>
    </citation>
    <scope>NUCLEOTIDE SEQUENCE [LARGE SCALE GENOMIC DNA]</scope>
    <source>
        <strain>Jake</strain>
    </source>
</reference>
<keyword id="KW-0963">Cytoplasm</keyword>
<keyword id="KW-0274">FAD</keyword>
<keyword id="KW-0285">Flavoprotein</keyword>
<keyword id="KW-0520">NAD</keyword>
<keyword id="KW-0819">tRNA processing</keyword>
<evidence type="ECO:0000255" key="1">
    <source>
        <dbReference type="HAMAP-Rule" id="MF_00129"/>
    </source>
</evidence>
<feature type="chain" id="PRO_1000016595" description="tRNA uridine 5-carboxymethylaminomethyl modification enzyme MnmG">
    <location>
        <begin position="1"/>
        <end position="625"/>
    </location>
</feature>
<feature type="binding site" evidence="1">
    <location>
        <begin position="10"/>
        <end position="15"/>
    </location>
    <ligand>
        <name>FAD</name>
        <dbReference type="ChEBI" id="CHEBI:57692"/>
    </ligand>
</feature>
<feature type="binding site" evidence="1">
    <location>
        <position position="122"/>
    </location>
    <ligand>
        <name>FAD</name>
        <dbReference type="ChEBI" id="CHEBI:57692"/>
    </ligand>
</feature>
<feature type="binding site" evidence="1">
    <location>
        <position position="181"/>
    </location>
    <ligand>
        <name>FAD</name>
        <dbReference type="ChEBI" id="CHEBI:57692"/>
    </ligand>
</feature>
<feature type="binding site" evidence="1">
    <location>
        <begin position="273"/>
        <end position="287"/>
    </location>
    <ligand>
        <name>NAD(+)</name>
        <dbReference type="ChEBI" id="CHEBI:57540"/>
    </ligand>
</feature>
<feature type="binding site" evidence="1">
    <location>
        <position position="370"/>
    </location>
    <ligand>
        <name>FAD</name>
        <dbReference type="ChEBI" id="CHEBI:57692"/>
    </ligand>
</feature>
<dbReference type="EMBL" id="CP000107">
    <property type="protein sequence ID" value="AAZ68685.1"/>
    <property type="molecule type" value="Genomic_DNA"/>
</dbReference>
<dbReference type="RefSeq" id="WP_011304762.1">
    <property type="nucleotide sequence ID" value="NC_007354.1"/>
</dbReference>
<dbReference type="SMR" id="Q3YRH0"/>
<dbReference type="FunCoup" id="Q3YRH0">
    <property type="interactions" value="328"/>
</dbReference>
<dbReference type="STRING" id="269484.Ecaj_0653"/>
<dbReference type="KEGG" id="ecn:Ecaj_0653"/>
<dbReference type="eggNOG" id="COG0445">
    <property type="taxonomic scope" value="Bacteria"/>
</dbReference>
<dbReference type="HOGENOM" id="CLU_007831_2_2_5"/>
<dbReference type="InParanoid" id="Q3YRH0"/>
<dbReference type="Proteomes" id="UP000000435">
    <property type="component" value="Chromosome"/>
</dbReference>
<dbReference type="GO" id="GO:0005737">
    <property type="term" value="C:cytoplasm"/>
    <property type="evidence" value="ECO:0007669"/>
    <property type="project" value="UniProtKB-SubCell"/>
</dbReference>
<dbReference type="GO" id="GO:0050660">
    <property type="term" value="F:flavin adenine dinucleotide binding"/>
    <property type="evidence" value="ECO:0007669"/>
    <property type="project" value="UniProtKB-UniRule"/>
</dbReference>
<dbReference type="GO" id="GO:0030488">
    <property type="term" value="P:tRNA methylation"/>
    <property type="evidence" value="ECO:0007669"/>
    <property type="project" value="TreeGrafter"/>
</dbReference>
<dbReference type="GO" id="GO:0002098">
    <property type="term" value="P:tRNA wobble uridine modification"/>
    <property type="evidence" value="ECO:0007669"/>
    <property type="project" value="InterPro"/>
</dbReference>
<dbReference type="FunFam" id="3.50.50.60:FF:000145">
    <property type="entry name" value="tRNA uridine 5-carboxymethylaminomethyl modification enzyme"/>
    <property type="match status" value="1"/>
</dbReference>
<dbReference type="FunFam" id="1.10.150.570:FF:000001">
    <property type="entry name" value="tRNA uridine 5-carboxymethylaminomethyl modification enzyme MnmG"/>
    <property type="match status" value="1"/>
</dbReference>
<dbReference type="FunFam" id="3.50.50.60:FF:000002">
    <property type="entry name" value="tRNA uridine 5-carboxymethylaminomethyl modification enzyme MnmG"/>
    <property type="match status" value="1"/>
</dbReference>
<dbReference type="Gene3D" id="3.50.50.60">
    <property type="entry name" value="FAD/NAD(P)-binding domain"/>
    <property type="match status" value="2"/>
</dbReference>
<dbReference type="Gene3D" id="1.10.150.570">
    <property type="entry name" value="GidA associated domain, C-terminal subdomain"/>
    <property type="match status" value="1"/>
</dbReference>
<dbReference type="Gene3D" id="1.10.10.1800">
    <property type="entry name" value="tRNA uridine 5-carboxymethylaminomethyl modification enzyme MnmG/GidA"/>
    <property type="match status" value="1"/>
</dbReference>
<dbReference type="HAMAP" id="MF_00129">
    <property type="entry name" value="MnmG_GidA"/>
    <property type="match status" value="1"/>
</dbReference>
<dbReference type="InterPro" id="IPR036188">
    <property type="entry name" value="FAD/NAD-bd_sf"/>
</dbReference>
<dbReference type="InterPro" id="IPR049312">
    <property type="entry name" value="GIDA_C_N"/>
</dbReference>
<dbReference type="InterPro" id="IPR004416">
    <property type="entry name" value="MnmG"/>
</dbReference>
<dbReference type="InterPro" id="IPR002218">
    <property type="entry name" value="MnmG-rel"/>
</dbReference>
<dbReference type="InterPro" id="IPR020595">
    <property type="entry name" value="MnmG-rel_CS"/>
</dbReference>
<dbReference type="InterPro" id="IPR026904">
    <property type="entry name" value="MnmG_C"/>
</dbReference>
<dbReference type="InterPro" id="IPR047001">
    <property type="entry name" value="MnmG_C_subdom"/>
</dbReference>
<dbReference type="InterPro" id="IPR044920">
    <property type="entry name" value="MnmG_C_subdom_sf"/>
</dbReference>
<dbReference type="InterPro" id="IPR040131">
    <property type="entry name" value="MnmG_N"/>
</dbReference>
<dbReference type="NCBIfam" id="TIGR00136">
    <property type="entry name" value="mnmG_gidA"/>
    <property type="match status" value="1"/>
</dbReference>
<dbReference type="PANTHER" id="PTHR11806">
    <property type="entry name" value="GLUCOSE INHIBITED DIVISION PROTEIN A"/>
    <property type="match status" value="1"/>
</dbReference>
<dbReference type="PANTHER" id="PTHR11806:SF0">
    <property type="entry name" value="PROTEIN MTO1 HOMOLOG, MITOCHONDRIAL"/>
    <property type="match status" value="1"/>
</dbReference>
<dbReference type="Pfam" id="PF01134">
    <property type="entry name" value="GIDA"/>
    <property type="match status" value="1"/>
</dbReference>
<dbReference type="Pfam" id="PF21680">
    <property type="entry name" value="GIDA_C_1st"/>
    <property type="match status" value="1"/>
</dbReference>
<dbReference type="Pfam" id="PF13932">
    <property type="entry name" value="SAM_GIDA_C"/>
    <property type="match status" value="1"/>
</dbReference>
<dbReference type="SMART" id="SM01228">
    <property type="entry name" value="GIDA_assoc_3"/>
    <property type="match status" value="1"/>
</dbReference>
<dbReference type="SUPFAM" id="SSF51905">
    <property type="entry name" value="FAD/NAD(P)-binding domain"/>
    <property type="match status" value="1"/>
</dbReference>
<dbReference type="PROSITE" id="PS01280">
    <property type="entry name" value="GIDA_1"/>
    <property type="match status" value="1"/>
</dbReference>
<dbReference type="PROSITE" id="PS01281">
    <property type="entry name" value="GIDA_2"/>
    <property type="match status" value="1"/>
</dbReference>
<protein>
    <recommendedName>
        <fullName evidence="1">tRNA uridine 5-carboxymethylaminomethyl modification enzyme MnmG</fullName>
    </recommendedName>
    <alternativeName>
        <fullName evidence="1">Glucose-inhibited division protein A</fullName>
    </alternativeName>
</protein>
<comment type="function">
    <text evidence="1">NAD-binding protein involved in the addition of a carboxymethylaminomethyl (cmnm) group at the wobble position (U34) of certain tRNAs, forming tRNA-cmnm(5)s(2)U34.</text>
</comment>
<comment type="cofactor">
    <cofactor evidence="1">
        <name>FAD</name>
        <dbReference type="ChEBI" id="CHEBI:57692"/>
    </cofactor>
</comment>
<comment type="subunit">
    <text evidence="1">Homodimer. Heterotetramer of two MnmE and two MnmG subunits.</text>
</comment>
<comment type="subcellular location">
    <subcellularLocation>
        <location evidence="1">Cytoplasm</location>
    </subcellularLocation>
</comment>
<comment type="similarity">
    <text evidence="1">Belongs to the MnmG family.</text>
</comment>
<accession>Q3YRH0</accession>
<organism>
    <name type="scientific">Ehrlichia canis (strain Jake)</name>
    <dbReference type="NCBI Taxonomy" id="269484"/>
    <lineage>
        <taxon>Bacteria</taxon>
        <taxon>Pseudomonadati</taxon>
        <taxon>Pseudomonadota</taxon>
        <taxon>Alphaproteobacteria</taxon>
        <taxon>Rickettsiales</taxon>
        <taxon>Anaplasmataceae</taxon>
        <taxon>Ehrlichia</taxon>
    </lineage>
</organism>
<gene>
    <name evidence="1" type="primary">mnmG</name>
    <name evidence="1" type="synonym">gidA</name>
    <name type="ordered locus">Ecaj_0653</name>
</gene>
<name>MNMG_EHRCJ</name>
<sequence>MSHYDVVVIGGGHAGCEAAAAASRIGAKTLLITHSISTIGEMSCNPAIGGIAKGTVVREVDALDGLMGKVIDKASIHSSILNRSKGPAVWGPRAQADRLIYKQTMQEIILNYPNLTVLEASVEDFTITQDNQKDSVKAVITSEQHTIYTSKLILTTGTFLQGTIHIGSYTTPAGRIGEQPSIGLAKTLEKYNFKLGRLRTGTPPRLDINSINFAVLQEQKGDIHPSPFSYISQSIDLPQISCYLTATNNKTHEVIKNNLHRAAASNLLKDIKAPRYCPSIEEKVRRFSDRNSHQVFLEPEGLNSDIIYPNGITTSSPLDVQYEMLKTIPGLEKVNIVRSGYSVEYNFIDPRELYHTLETKKISGLYFAGQINGTTGYEEAAGQGIIAGINAALSLSSNYEPFILKRSDAYIGVMIDDLVTLGTSEPYRLFTSRAEYRLRLRSDNADLRLTELGYKVSAVSSKRYCALKNKQHDIESLTNILKNIIITPTQLAAYDIPVSQDGVKRSIFDLLSHPNINIETVSKICDVIKKFSKAVVSQVEIEGKYAPYFIRQDADIQDFIEEENTHIPSNIEFSQIHGLSKEIQEKLAHIKPPSIGSARRIPGVTPAAITSILIYLRYHKNKKIS</sequence>